<name>Y1693_CLOPE</name>
<feature type="chain" id="PRO_0000088439" description="Putative zinc metalloprotease CPE1693">
    <location>
        <begin position="1"/>
        <end position="335"/>
    </location>
</feature>
<feature type="transmembrane region" description="Helical" evidence="1">
    <location>
        <begin position="88"/>
        <end position="110"/>
    </location>
</feature>
<feature type="transmembrane region" description="Helical" evidence="1">
    <location>
        <begin position="262"/>
        <end position="284"/>
    </location>
</feature>
<feature type="transmembrane region" description="Helical" evidence="1">
    <location>
        <begin position="312"/>
        <end position="334"/>
    </location>
</feature>
<feature type="domain" description="PDZ" evidence="2">
    <location>
        <begin position="96"/>
        <end position="174"/>
    </location>
</feature>
<feature type="active site" evidence="3">
    <location>
        <position position="18"/>
    </location>
</feature>
<feature type="binding site" evidence="3">
    <location>
        <position position="17"/>
    </location>
    <ligand>
        <name>Zn(2+)</name>
        <dbReference type="ChEBI" id="CHEBI:29105"/>
        <note>catalytic</note>
    </ligand>
</feature>
<feature type="binding site" evidence="3">
    <location>
        <position position="21"/>
    </location>
    <ligand>
        <name>Zn(2+)</name>
        <dbReference type="ChEBI" id="CHEBI:29105"/>
        <note>catalytic</note>
    </ligand>
</feature>
<organism>
    <name type="scientific">Clostridium perfringens (strain 13 / Type A)</name>
    <dbReference type="NCBI Taxonomy" id="195102"/>
    <lineage>
        <taxon>Bacteria</taxon>
        <taxon>Bacillati</taxon>
        <taxon>Bacillota</taxon>
        <taxon>Clostridia</taxon>
        <taxon>Eubacteriales</taxon>
        <taxon>Clostridiaceae</taxon>
        <taxon>Clostridium</taxon>
    </lineage>
</organism>
<reference key="1">
    <citation type="journal article" date="2002" name="Proc. Natl. Acad. Sci. U.S.A.">
        <title>Complete genome sequence of Clostridium perfringens, an anaerobic flesh-eater.</title>
        <authorList>
            <person name="Shimizu T."/>
            <person name="Ohtani K."/>
            <person name="Hirakawa H."/>
            <person name="Ohshima K."/>
            <person name="Yamashita A."/>
            <person name="Shiba T."/>
            <person name="Ogasawara N."/>
            <person name="Hattori M."/>
            <person name="Kuhara S."/>
            <person name="Hayashi H."/>
        </authorList>
    </citation>
    <scope>NUCLEOTIDE SEQUENCE [LARGE SCALE GENOMIC DNA]</scope>
    <source>
        <strain>13 / Type A</strain>
    </source>
</reference>
<protein>
    <recommendedName>
        <fullName>Putative zinc metalloprotease CPE1693</fullName>
        <ecNumber>3.4.24.-</ecNumber>
    </recommendedName>
</protein>
<accession>Q8XJR2</accession>
<proteinExistence type="inferred from homology"/>
<evidence type="ECO:0000255" key="1"/>
<evidence type="ECO:0000255" key="2">
    <source>
        <dbReference type="PROSITE-ProRule" id="PRU00143"/>
    </source>
</evidence>
<evidence type="ECO:0000255" key="3">
    <source>
        <dbReference type="PROSITE-ProRule" id="PRU10095"/>
    </source>
</evidence>
<evidence type="ECO:0000305" key="4"/>
<keyword id="KW-1003">Cell membrane</keyword>
<keyword id="KW-0378">Hydrolase</keyword>
<keyword id="KW-0472">Membrane</keyword>
<keyword id="KW-0479">Metal-binding</keyword>
<keyword id="KW-0482">Metalloprotease</keyword>
<keyword id="KW-0645">Protease</keyword>
<keyword id="KW-1185">Reference proteome</keyword>
<keyword id="KW-0812">Transmembrane</keyword>
<keyword id="KW-1133">Transmembrane helix</keyword>
<keyword id="KW-0862">Zinc</keyword>
<sequence length="335" mass="36491">MYIIFALLAFSALILVHELGHFIVAKLNGIYVEEFAIGMGPKLFGVKVGETEYNLRILPFGGFVKMLGEEDESDDSRSLNAKTPIQRILVMGAGAFMNYVLALIIFIGLAMSSGFAENKVASVVPNSPAQEIGIEQGDEFLKIDGNKIHTTDDFRMGLALAKGNPVELEIKRGNDVLTKTVQPILNESGMYQVGISYALVEKPTLLQGIKQGFNETRSLVSQSFIALKTIVTGEANLKTDVGGPVTIIKMSGQAAKAGANTLLWFMAFLSVQLAVFNLLPFPALDGGRIFIELIQMIIRKEIPAKYIEAVNTVGFMLLMGLMVLVTIKDIIFPIL</sequence>
<dbReference type="EC" id="3.4.24.-"/>
<dbReference type="EMBL" id="BA000016">
    <property type="protein sequence ID" value="BAB81399.1"/>
    <property type="molecule type" value="Genomic_DNA"/>
</dbReference>
<dbReference type="SMR" id="Q8XJR2"/>
<dbReference type="STRING" id="195102.gene:10490957"/>
<dbReference type="KEGG" id="cpe:CPE1693"/>
<dbReference type="HOGENOM" id="CLU_025778_1_3_9"/>
<dbReference type="Proteomes" id="UP000000818">
    <property type="component" value="Chromosome"/>
</dbReference>
<dbReference type="GO" id="GO:0005886">
    <property type="term" value="C:plasma membrane"/>
    <property type="evidence" value="ECO:0007669"/>
    <property type="project" value="UniProtKB-SubCell"/>
</dbReference>
<dbReference type="GO" id="GO:0046872">
    <property type="term" value="F:metal ion binding"/>
    <property type="evidence" value="ECO:0007669"/>
    <property type="project" value="UniProtKB-KW"/>
</dbReference>
<dbReference type="GO" id="GO:0004222">
    <property type="term" value="F:metalloendopeptidase activity"/>
    <property type="evidence" value="ECO:0007669"/>
    <property type="project" value="InterPro"/>
</dbReference>
<dbReference type="GO" id="GO:0006508">
    <property type="term" value="P:proteolysis"/>
    <property type="evidence" value="ECO:0007669"/>
    <property type="project" value="UniProtKB-KW"/>
</dbReference>
<dbReference type="CDD" id="cd23081">
    <property type="entry name" value="cpPDZ_EcRseP-like"/>
    <property type="match status" value="1"/>
</dbReference>
<dbReference type="CDD" id="cd06163">
    <property type="entry name" value="S2P-M50_PDZ_RseP-like"/>
    <property type="match status" value="1"/>
</dbReference>
<dbReference type="Gene3D" id="2.30.42.10">
    <property type="match status" value="1"/>
</dbReference>
<dbReference type="InterPro" id="IPR001478">
    <property type="entry name" value="PDZ"/>
</dbReference>
<dbReference type="InterPro" id="IPR036034">
    <property type="entry name" value="PDZ_sf"/>
</dbReference>
<dbReference type="InterPro" id="IPR004387">
    <property type="entry name" value="Pept_M50_Zn"/>
</dbReference>
<dbReference type="InterPro" id="IPR008915">
    <property type="entry name" value="Peptidase_M50"/>
</dbReference>
<dbReference type="NCBIfam" id="TIGR00054">
    <property type="entry name" value="RIP metalloprotease RseP"/>
    <property type="match status" value="1"/>
</dbReference>
<dbReference type="PANTHER" id="PTHR42837:SF2">
    <property type="entry name" value="MEMBRANE METALLOPROTEASE ARASP2, CHLOROPLASTIC-RELATED"/>
    <property type="match status" value="1"/>
</dbReference>
<dbReference type="PANTHER" id="PTHR42837">
    <property type="entry name" value="REGULATOR OF SIGMA-E PROTEASE RSEP"/>
    <property type="match status" value="1"/>
</dbReference>
<dbReference type="Pfam" id="PF13180">
    <property type="entry name" value="PDZ_2"/>
    <property type="match status" value="1"/>
</dbReference>
<dbReference type="Pfam" id="PF02163">
    <property type="entry name" value="Peptidase_M50"/>
    <property type="match status" value="1"/>
</dbReference>
<dbReference type="SMART" id="SM00228">
    <property type="entry name" value="PDZ"/>
    <property type="match status" value="1"/>
</dbReference>
<dbReference type="SUPFAM" id="SSF50156">
    <property type="entry name" value="PDZ domain-like"/>
    <property type="match status" value="1"/>
</dbReference>
<dbReference type="PROSITE" id="PS50106">
    <property type="entry name" value="PDZ"/>
    <property type="match status" value="1"/>
</dbReference>
<dbReference type="PROSITE" id="PS00142">
    <property type="entry name" value="ZINC_PROTEASE"/>
    <property type="match status" value="1"/>
</dbReference>
<comment type="cofactor">
    <cofactor evidence="4">
        <name>Zn(2+)</name>
        <dbReference type="ChEBI" id="CHEBI:29105"/>
    </cofactor>
</comment>
<comment type="subcellular location">
    <subcellularLocation>
        <location evidence="4">Cell membrane</location>
        <topology evidence="4">Multi-pass membrane protein</topology>
    </subcellularLocation>
</comment>
<comment type="similarity">
    <text evidence="4">Belongs to the peptidase M50B family.</text>
</comment>
<gene>
    <name type="ordered locus">CPE1693</name>
</gene>